<keyword id="KW-1015">Disulfide bond</keyword>
<keyword id="KW-0325">Glycoprotein</keyword>
<keyword id="KW-0391">Immunity</keyword>
<keyword id="KW-0472">Membrane</keyword>
<keyword id="KW-0490">MHC I</keyword>
<keyword id="KW-0597">Phosphoprotein</keyword>
<keyword id="KW-1185">Reference proteome</keyword>
<keyword id="KW-0732">Signal</keyword>
<keyword id="KW-0812">Transmembrane</keyword>
<keyword id="KW-1133">Transmembrane helix</keyword>
<evidence type="ECO:0000250" key="1"/>
<evidence type="ECO:0000250" key="2">
    <source>
        <dbReference type="UniProtKB" id="P01900"/>
    </source>
</evidence>
<evidence type="ECO:0000250" key="3">
    <source>
        <dbReference type="UniProtKB" id="P01901"/>
    </source>
</evidence>
<evidence type="ECO:0000255" key="4"/>
<evidence type="ECO:0000255" key="5">
    <source>
        <dbReference type="PROSITE-ProRule" id="PRU00114"/>
    </source>
</evidence>
<evidence type="ECO:0000305" key="6"/>
<comment type="function">
    <text>Involved in the presentation of foreign antigens to the immune system.</text>
</comment>
<comment type="subunit">
    <text>Heterodimer of an alpha chain and a beta chain (beta-2-microglobulin).</text>
</comment>
<comment type="subcellular location">
    <subcellularLocation>
        <location>Membrane</location>
        <topology>Single-pass type I membrane protein</topology>
    </subcellularLocation>
</comment>
<comment type="similarity">
    <text evidence="6">Belongs to the MHC class I family.</text>
</comment>
<name>HA1B_BOVIN</name>
<protein>
    <recommendedName>
        <fullName>BOLA class I histocompatibility antigen, alpha chain BL3-7</fullName>
    </recommendedName>
</protein>
<organism>
    <name type="scientific">Bos taurus</name>
    <name type="common">Bovine</name>
    <dbReference type="NCBI Taxonomy" id="9913"/>
    <lineage>
        <taxon>Eukaryota</taxon>
        <taxon>Metazoa</taxon>
        <taxon>Chordata</taxon>
        <taxon>Craniata</taxon>
        <taxon>Vertebrata</taxon>
        <taxon>Euteleostomi</taxon>
        <taxon>Mammalia</taxon>
        <taxon>Eutheria</taxon>
        <taxon>Laurasiatheria</taxon>
        <taxon>Artiodactyla</taxon>
        <taxon>Ruminantia</taxon>
        <taxon>Pecora</taxon>
        <taxon>Bovidae</taxon>
        <taxon>Bovinae</taxon>
        <taxon>Bos</taxon>
    </lineage>
</organism>
<reference key="1">
    <citation type="journal article" date="1988" name="J. Immunol.">
        <title>Molecular cloning of bovine class I MHC cDNA.</title>
        <authorList>
            <person name="Ennis P.D."/>
            <person name="Jackson A.P."/>
            <person name="Parham P."/>
        </authorList>
    </citation>
    <scope>NUCLEOTIDE SEQUENCE [MRNA]</scope>
</reference>
<dbReference type="EMBL" id="M21043">
    <property type="protein sequence ID" value="AAA30641.1"/>
    <property type="molecule type" value="mRNA"/>
</dbReference>
<dbReference type="PIR" id="B27638">
    <property type="entry name" value="B27638"/>
</dbReference>
<dbReference type="SMR" id="P13753"/>
<dbReference type="FunCoup" id="P13753">
    <property type="interactions" value="201"/>
</dbReference>
<dbReference type="STRING" id="9913.ENSBTAP00000035745"/>
<dbReference type="GlyGen" id="P13753">
    <property type="glycosylation" value="1 site"/>
</dbReference>
<dbReference type="PaxDb" id="9913-ENSBTAP00000031126"/>
<dbReference type="PeptideAtlas" id="P13753"/>
<dbReference type="eggNOG" id="ENOG502RQEK">
    <property type="taxonomic scope" value="Eukaryota"/>
</dbReference>
<dbReference type="InParanoid" id="P13753"/>
<dbReference type="Proteomes" id="UP000009136">
    <property type="component" value="Unplaced"/>
</dbReference>
<dbReference type="GO" id="GO:0009897">
    <property type="term" value="C:external side of plasma membrane"/>
    <property type="evidence" value="ECO:0000318"/>
    <property type="project" value="GO_Central"/>
</dbReference>
<dbReference type="GO" id="GO:0005615">
    <property type="term" value="C:extracellular space"/>
    <property type="evidence" value="ECO:0000318"/>
    <property type="project" value="GO_Central"/>
</dbReference>
<dbReference type="GO" id="GO:0098553">
    <property type="term" value="C:lumenal side of endoplasmic reticulum membrane"/>
    <property type="evidence" value="ECO:0007669"/>
    <property type="project" value="UniProtKB-ARBA"/>
</dbReference>
<dbReference type="GO" id="GO:0042612">
    <property type="term" value="C:MHC class I protein complex"/>
    <property type="evidence" value="ECO:0007669"/>
    <property type="project" value="UniProtKB-KW"/>
</dbReference>
<dbReference type="GO" id="GO:0030670">
    <property type="term" value="C:phagocytic vesicle membrane"/>
    <property type="evidence" value="ECO:0007669"/>
    <property type="project" value="UniProtKB-ARBA"/>
</dbReference>
<dbReference type="GO" id="GO:0042605">
    <property type="term" value="F:peptide antigen binding"/>
    <property type="evidence" value="ECO:0000318"/>
    <property type="project" value="GO_Central"/>
</dbReference>
<dbReference type="GO" id="GO:0005102">
    <property type="term" value="F:signaling receptor binding"/>
    <property type="evidence" value="ECO:0000318"/>
    <property type="project" value="GO_Central"/>
</dbReference>
<dbReference type="GO" id="GO:0002486">
    <property type="term" value="P:antigen processing and presentation of endogenous peptide antigen via MHC class I via ER pathway, TAP-independent"/>
    <property type="evidence" value="ECO:0000318"/>
    <property type="project" value="GO_Central"/>
</dbReference>
<dbReference type="GO" id="GO:0002476">
    <property type="term" value="P:antigen processing and presentation of endogenous peptide antigen via MHC class Ib"/>
    <property type="evidence" value="ECO:0000318"/>
    <property type="project" value="GO_Central"/>
</dbReference>
<dbReference type="GO" id="GO:0006955">
    <property type="term" value="P:immune response"/>
    <property type="evidence" value="ECO:0000318"/>
    <property type="project" value="GO_Central"/>
</dbReference>
<dbReference type="GO" id="GO:0001916">
    <property type="term" value="P:positive regulation of T cell mediated cytotoxicity"/>
    <property type="evidence" value="ECO:0000318"/>
    <property type="project" value="GO_Central"/>
</dbReference>
<dbReference type="CDD" id="cd07698">
    <property type="entry name" value="IgC1_MHC_I_alpha3"/>
    <property type="match status" value="1"/>
</dbReference>
<dbReference type="FunFam" id="2.60.40.10:FF:000014">
    <property type="entry name" value="H-2 class I histocompatibility antigen, alpha chain"/>
    <property type="match status" value="1"/>
</dbReference>
<dbReference type="FunFam" id="3.30.500.10:FF:000001">
    <property type="entry name" value="H-2 class I histocompatibility antigen, alpha chain"/>
    <property type="match status" value="1"/>
</dbReference>
<dbReference type="Gene3D" id="2.60.40.10">
    <property type="entry name" value="Immunoglobulins"/>
    <property type="match status" value="1"/>
</dbReference>
<dbReference type="Gene3D" id="3.30.500.10">
    <property type="entry name" value="MHC class I-like antigen recognition-like"/>
    <property type="match status" value="1"/>
</dbReference>
<dbReference type="InterPro" id="IPR007110">
    <property type="entry name" value="Ig-like_dom"/>
</dbReference>
<dbReference type="InterPro" id="IPR036179">
    <property type="entry name" value="Ig-like_dom_sf"/>
</dbReference>
<dbReference type="InterPro" id="IPR013783">
    <property type="entry name" value="Ig-like_fold"/>
</dbReference>
<dbReference type="InterPro" id="IPR003006">
    <property type="entry name" value="Ig/MHC_CS"/>
</dbReference>
<dbReference type="InterPro" id="IPR003597">
    <property type="entry name" value="Ig_C1-set"/>
</dbReference>
<dbReference type="InterPro" id="IPR050208">
    <property type="entry name" value="MHC_class-I_related"/>
</dbReference>
<dbReference type="InterPro" id="IPR011161">
    <property type="entry name" value="MHC_I-like_Ag-recog"/>
</dbReference>
<dbReference type="InterPro" id="IPR037055">
    <property type="entry name" value="MHC_I-like_Ag-recog_sf"/>
</dbReference>
<dbReference type="InterPro" id="IPR011162">
    <property type="entry name" value="MHC_I/II-like_Ag-recog"/>
</dbReference>
<dbReference type="InterPro" id="IPR001039">
    <property type="entry name" value="MHC_I_a_a1/a2"/>
</dbReference>
<dbReference type="InterPro" id="IPR010579">
    <property type="entry name" value="MHC_I_a_C"/>
</dbReference>
<dbReference type="PANTHER" id="PTHR16675:SF251">
    <property type="entry name" value="HLA CLASS I HISTOCOMPATIBILITY ANTIGEN, C ALPHA CHAIN"/>
    <property type="match status" value="1"/>
</dbReference>
<dbReference type="PANTHER" id="PTHR16675">
    <property type="entry name" value="MHC CLASS I-RELATED"/>
    <property type="match status" value="1"/>
</dbReference>
<dbReference type="Pfam" id="PF07654">
    <property type="entry name" value="C1-set"/>
    <property type="match status" value="1"/>
</dbReference>
<dbReference type="Pfam" id="PF00129">
    <property type="entry name" value="MHC_I"/>
    <property type="match status" value="1"/>
</dbReference>
<dbReference type="Pfam" id="PF06623">
    <property type="entry name" value="MHC_I_C"/>
    <property type="match status" value="1"/>
</dbReference>
<dbReference type="PRINTS" id="PR01638">
    <property type="entry name" value="MHCCLASSI"/>
</dbReference>
<dbReference type="SMART" id="SM00407">
    <property type="entry name" value="IGc1"/>
    <property type="match status" value="1"/>
</dbReference>
<dbReference type="SUPFAM" id="SSF48726">
    <property type="entry name" value="Immunoglobulin"/>
    <property type="match status" value="1"/>
</dbReference>
<dbReference type="SUPFAM" id="SSF54452">
    <property type="entry name" value="MHC antigen-recognition domain"/>
    <property type="match status" value="1"/>
</dbReference>
<dbReference type="PROSITE" id="PS50835">
    <property type="entry name" value="IG_LIKE"/>
    <property type="match status" value="1"/>
</dbReference>
<dbReference type="PROSITE" id="PS00290">
    <property type="entry name" value="IG_MHC"/>
    <property type="match status" value="1"/>
</dbReference>
<sequence>MRVMRVMRPRTLLLLLSGVLVLTETLAGSHSLRYFYTGVSRPGLGEPRFIAVGYVDDTQFVRFDSDAPNPREEPRVPWMEQEGPEYWDRNTRIYKDTAQIFRVDLNTLRGYYNQSETGSHNIQAMYGCDVGPDGRLLRGFWQFGYDGRDYIALNEELRSWTAADTAAQITKRKWEAAGAAETWRNYLEGECVEWLRRYLENGKDTLLRADPPKAHVTHHSISDREVTLRCWALGFYPEEISLTWQREGEDQTQDMELVETRPSGDGTFQKWAALVVPSGEEQRYTCRVQHEGLQEPLTLRWEPPQTSFLIMGIIVGLVLLVVALVAGAVIWRKKRSGEKGRIYTQAASSDSAQGSDVSLTVPKV</sequence>
<accession>P13753</accession>
<feature type="signal peptide" evidence="4">
    <location>
        <begin position="1"/>
        <end position="27"/>
    </location>
</feature>
<feature type="chain" id="PRO_0000018940" description="BOLA class I histocompatibility antigen, alpha chain BL3-7">
    <location>
        <begin position="28"/>
        <end position="364"/>
    </location>
</feature>
<feature type="topological domain" description="Extracellular" evidence="4">
    <location>
        <begin position="28"/>
        <end position="310"/>
    </location>
</feature>
<feature type="transmembrane region" description="Helical" evidence="4">
    <location>
        <begin position="311"/>
        <end position="331"/>
    </location>
</feature>
<feature type="topological domain" description="Cytoplasmic" evidence="4">
    <location>
        <begin position="332"/>
        <end position="364"/>
    </location>
</feature>
<feature type="domain" description="Ig-like C1-type">
    <location>
        <begin position="212"/>
        <end position="298"/>
    </location>
</feature>
<feature type="region of interest" description="Alpha-1">
    <location>
        <begin position="28"/>
        <end position="117"/>
    </location>
</feature>
<feature type="region of interest" description="Alpha-2">
    <location>
        <begin position="118"/>
        <end position="209"/>
    </location>
</feature>
<feature type="region of interest" description="Alpha-3">
    <location>
        <begin position="210"/>
        <end position="301"/>
    </location>
</feature>
<feature type="region of interest" description="Connecting peptide">
    <location>
        <begin position="302"/>
        <end position="310"/>
    </location>
</feature>
<feature type="modified residue" description="Phosphoserine" evidence="2">
    <location>
        <position position="355"/>
    </location>
</feature>
<feature type="modified residue" description="Phosphoserine" evidence="3">
    <location>
        <position position="358"/>
    </location>
</feature>
<feature type="glycosylation site" description="N-linked (GlcNAc...) asparagine" evidence="1">
    <location>
        <position position="113"/>
    </location>
</feature>
<feature type="disulfide bond" evidence="5">
    <location>
        <begin position="128"/>
        <end position="191"/>
    </location>
</feature>
<feature type="disulfide bond" evidence="5">
    <location>
        <begin position="230"/>
        <end position="286"/>
    </location>
</feature>
<proteinExistence type="evidence at transcript level"/>